<evidence type="ECO:0000255" key="1">
    <source>
        <dbReference type="HAMAP-Rule" id="MF_01342"/>
    </source>
</evidence>
<evidence type="ECO:0000305" key="2"/>
<comment type="function">
    <text evidence="1">Binds 23S rRNA and is also seen to make contacts with the A and possibly P site tRNAs.</text>
</comment>
<comment type="subunit">
    <text evidence="1">Part of the 50S ribosomal subunit.</text>
</comment>
<comment type="similarity">
    <text evidence="1">Belongs to the universal ribosomal protein uL16 family.</text>
</comment>
<name>RL16_GLAP5</name>
<keyword id="KW-1185">Reference proteome</keyword>
<keyword id="KW-0687">Ribonucleoprotein</keyword>
<keyword id="KW-0689">Ribosomal protein</keyword>
<keyword id="KW-0694">RNA-binding</keyword>
<keyword id="KW-0699">rRNA-binding</keyword>
<keyword id="KW-0820">tRNA-binding</keyword>
<sequence>MLQPKRTKFRKVHKGRNRGIAGGTEVSFGSFGLKAIGRGRLTARQIEAARRAMSRAVKRQGKIWIRVFPDKPITEKPLEVRMGKGKGNVEYWVALIQPGKVLYEMDGVSEEVARNAFALAAAKLPFKTTFVTKTVM</sequence>
<gene>
    <name evidence="1" type="primary">rplP</name>
    <name type="ordered locus">HAPS_1613</name>
</gene>
<protein>
    <recommendedName>
        <fullName evidence="1">Large ribosomal subunit protein uL16</fullName>
    </recommendedName>
    <alternativeName>
        <fullName evidence="2">50S ribosomal protein L16</fullName>
    </alternativeName>
</protein>
<feature type="chain" id="PRO_1000166361" description="Large ribosomal subunit protein uL16">
    <location>
        <begin position="1"/>
        <end position="136"/>
    </location>
</feature>
<dbReference type="EMBL" id="CP001321">
    <property type="protein sequence ID" value="ACL33164.1"/>
    <property type="molecule type" value="Genomic_DNA"/>
</dbReference>
<dbReference type="RefSeq" id="WP_006249357.1">
    <property type="nucleotide sequence ID" value="NC_011852.1"/>
</dbReference>
<dbReference type="SMR" id="B8F762"/>
<dbReference type="STRING" id="557723.HAPS_1613"/>
<dbReference type="GeneID" id="67367803"/>
<dbReference type="KEGG" id="hap:HAPS_1613"/>
<dbReference type="HOGENOM" id="CLU_078858_2_1_6"/>
<dbReference type="Proteomes" id="UP000006743">
    <property type="component" value="Chromosome"/>
</dbReference>
<dbReference type="GO" id="GO:0022625">
    <property type="term" value="C:cytosolic large ribosomal subunit"/>
    <property type="evidence" value="ECO:0007669"/>
    <property type="project" value="TreeGrafter"/>
</dbReference>
<dbReference type="GO" id="GO:0019843">
    <property type="term" value="F:rRNA binding"/>
    <property type="evidence" value="ECO:0007669"/>
    <property type="project" value="UniProtKB-UniRule"/>
</dbReference>
<dbReference type="GO" id="GO:0003735">
    <property type="term" value="F:structural constituent of ribosome"/>
    <property type="evidence" value="ECO:0007669"/>
    <property type="project" value="InterPro"/>
</dbReference>
<dbReference type="GO" id="GO:0000049">
    <property type="term" value="F:tRNA binding"/>
    <property type="evidence" value="ECO:0007669"/>
    <property type="project" value="UniProtKB-KW"/>
</dbReference>
<dbReference type="GO" id="GO:0006412">
    <property type="term" value="P:translation"/>
    <property type="evidence" value="ECO:0007669"/>
    <property type="project" value="UniProtKB-UniRule"/>
</dbReference>
<dbReference type="CDD" id="cd01433">
    <property type="entry name" value="Ribosomal_L16_L10e"/>
    <property type="match status" value="1"/>
</dbReference>
<dbReference type="FunFam" id="3.90.1170.10:FF:000001">
    <property type="entry name" value="50S ribosomal protein L16"/>
    <property type="match status" value="1"/>
</dbReference>
<dbReference type="Gene3D" id="3.90.1170.10">
    <property type="entry name" value="Ribosomal protein L10e/L16"/>
    <property type="match status" value="1"/>
</dbReference>
<dbReference type="HAMAP" id="MF_01342">
    <property type="entry name" value="Ribosomal_uL16"/>
    <property type="match status" value="1"/>
</dbReference>
<dbReference type="InterPro" id="IPR047873">
    <property type="entry name" value="Ribosomal_uL16"/>
</dbReference>
<dbReference type="InterPro" id="IPR000114">
    <property type="entry name" value="Ribosomal_uL16_bact-type"/>
</dbReference>
<dbReference type="InterPro" id="IPR020798">
    <property type="entry name" value="Ribosomal_uL16_CS"/>
</dbReference>
<dbReference type="InterPro" id="IPR016180">
    <property type="entry name" value="Ribosomal_uL16_dom"/>
</dbReference>
<dbReference type="InterPro" id="IPR036920">
    <property type="entry name" value="Ribosomal_uL16_sf"/>
</dbReference>
<dbReference type="NCBIfam" id="TIGR01164">
    <property type="entry name" value="rplP_bact"/>
    <property type="match status" value="1"/>
</dbReference>
<dbReference type="PANTHER" id="PTHR12220">
    <property type="entry name" value="50S/60S RIBOSOMAL PROTEIN L16"/>
    <property type="match status" value="1"/>
</dbReference>
<dbReference type="PANTHER" id="PTHR12220:SF13">
    <property type="entry name" value="LARGE RIBOSOMAL SUBUNIT PROTEIN UL16M"/>
    <property type="match status" value="1"/>
</dbReference>
<dbReference type="Pfam" id="PF00252">
    <property type="entry name" value="Ribosomal_L16"/>
    <property type="match status" value="1"/>
</dbReference>
<dbReference type="PRINTS" id="PR00060">
    <property type="entry name" value="RIBOSOMALL16"/>
</dbReference>
<dbReference type="SUPFAM" id="SSF54686">
    <property type="entry name" value="Ribosomal protein L16p/L10e"/>
    <property type="match status" value="1"/>
</dbReference>
<dbReference type="PROSITE" id="PS00586">
    <property type="entry name" value="RIBOSOMAL_L16_1"/>
    <property type="match status" value="1"/>
</dbReference>
<dbReference type="PROSITE" id="PS00701">
    <property type="entry name" value="RIBOSOMAL_L16_2"/>
    <property type="match status" value="1"/>
</dbReference>
<organism>
    <name type="scientific">Glaesserella parasuis serovar 5 (strain SH0165)</name>
    <name type="common">Haemophilus parasuis</name>
    <dbReference type="NCBI Taxonomy" id="557723"/>
    <lineage>
        <taxon>Bacteria</taxon>
        <taxon>Pseudomonadati</taxon>
        <taxon>Pseudomonadota</taxon>
        <taxon>Gammaproteobacteria</taxon>
        <taxon>Pasteurellales</taxon>
        <taxon>Pasteurellaceae</taxon>
        <taxon>Glaesserella</taxon>
    </lineage>
</organism>
<reference key="1">
    <citation type="journal article" date="2009" name="J. Bacteriol.">
        <title>Complete genome sequence of Haemophilus parasuis SH0165.</title>
        <authorList>
            <person name="Yue M."/>
            <person name="Yang F."/>
            <person name="Yang J."/>
            <person name="Bei W."/>
            <person name="Cai X."/>
            <person name="Chen L."/>
            <person name="Dong J."/>
            <person name="Zhou R."/>
            <person name="Jin M."/>
            <person name="Jin Q."/>
            <person name="Chen H."/>
        </authorList>
    </citation>
    <scope>NUCLEOTIDE SEQUENCE [LARGE SCALE GENOMIC DNA]</scope>
    <source>
        <strain>SH0165</strain>
    </source>
</reference>
<accession>B8F762</accession>
<proteinExistence type="inferred from homology"/>